<dbReference type="EC" id="2.3.1.274" evidence="1"/>
<dbReference type="EMBL" id="AL591688">
    <property type="protein sequence ID" value="CAC45801.1"/>
    <property type="molecule type" value="Genomic_DNA"/>
</dbReference>
<dbReference type="RefSeq" id="NP_385328.1">
    <property type="nucleotide sequence ID" value="NC_003047.1"/>
</dbReference>
<dbReference type="RefSeq" id="WP_003529283.1">
    <property type="nucleotide sequence ID" value="NC_003047.1"/>
</dbReference>
<dbReference type="SMR" id="Q92QT5"/>
<dbReference type="EnsemblBacteria" id="CAC45801">
    <property type="protein sequence ID" value="CAC45801"/>
    <property type="gene ID" value="SMc01784"/>
</dbReference>
<dbReference type="GeneID" id="89575545"/>
<dbReference type="KEGG" id="sme:SMc01784"/>
<dbReference type="PATRIC" id="fig|266834.11.peg.2634"/>
<dbReference type="eggNOG" id="COG0416">
    <property type="taxonomic scope" value="Bacteria"/>
</dbReference>
<dbReference type="HOGENOM" id="CLU_039379_1_0_5"/>
<dbReference type="OrthoDB" id="9806408at2"/>
<dbReference type="UniPathway" id="UPA00085"/>
<dbReference type="Proteomes" id="UP000001976">
    <property type="component" value="Chromosome"/>
</dbReference>
<dbReference type="GO" id="GO:0005737">
    <property type="term" value="C:cytoplasm"/>
    <property type="evidence" value="ECO:0007669"/>
    <property type="project" value="UniProtKB-SubCell"/>
</dbReference>
<dbReference type="GO" id="GO:0043811">
    <property type="term" value="F:phosphate:acyl-[acyl carrier protein] acyltransferase activity"/>
    <property type="evidence" value="ECO:0007669"/>
    <property type="project" value="UniProtKB-UniRule"/>
</dbReference>
<dbReference type="GO" id="GO:0006633">
    <property type="term" value="P:fatty acid biosynthetic process"/>
    <property type="evidence" value="ECO:0007669"/>
    <property type="project" value="UniProtKB-UniRule"/>
</dbReference>
<dbReference type="GO" id="GO:0008654">
    <property type="term" value="P:phospholipid biosynthetic process"/>
    <property type="evidence" value="ECO:0007669"/>
    <property type="project" value="UniProtKB-KW"/>
</dbReference>
<dbReference type="Gene3D" id="3.40.718.10">
    <property type="entry name" value="Isopropylmalate Dehydrogenase"/>
    <property type="match status" value="1"/>
</dbReference>
<dbReference type="HAMAP" id="MF_00019">
    <property type="entry name" value="PlsX"/>
    <property type="match status" value="1"/>
</dbReference>
<dbReference type="InterPro" id="IPR003664">
    <property type="entry name" value="FA_synthesis"/>
</dbReference>
<dbReference type="InterPro" id="IPR012281">
    <property type="entry name" value="Phospholipid_synth_PlsX-like"/>
</dbReference>
<dbReference type="NCBIfam" id="TIGR00182">
    <property type="entry name" value="plsX"/>
    <property type="match status" value="1"/>
</dbReference>
<dbReference type="PANTHER" id="PTHR30100">
    <property type="entry name" value="FATTY ACID/PHOSPHOLIPID SYNTHESIS PROTEIN PLSX"/>
    <property type="match status" value="1"/>
</dbReference>
<dbReference type="PANTHER" id="PTHR30100:SF1">
    <property type="entry name" value="PHOSPHATE ACYLTRANSFERASE"/>
    <property type="match status" value="1"/>
</dbReference>
<dbReference type="Pfam" id="PF02504">
    <property type="entry name" value="FA_synthesis"/>
    <property type="match status" value="1"/>
</dbReference>
<dbReference type="PIRSF" id="PIRSF002465">
    <property type="entry name" value="Phsphlp_syn_PlsX"/>
    <property type="match status" value="1"/>
</dbReference>
<dbReference type="SUPFAM" id="SSF53659">
    <property type="entry name" value="Isocitrate/Isopropylmalate dehydrogenase-like"/>
    <property type="match status" value="1"/>
</dbReference>
<feature type="chain" id="PRO_0000189927" description="Phosphate acyltransferase">
    <location>
        <begin position="1"/>
        <end position="347"/>
    </location>
</feature>
<keyword id="KW-0963">Cytoplasm</keyword>
<keyword id="KW-0444">Lipid biosynthesis</keyword>
<keyword id="KW-0443">Lipid metabolism</keyword>
<keyword id="KW-0594">Phospholipid biosynthesis</keyword>
<keyword id="KW-1208">Phospholipid metabolism</keyword>
<keyword id="KW-1185">Reference proteome</keyword>
<keyword id="KW-0808">Transferase</keyword>
<evidence type="ECO:0000255" key="1">
    <source>
        <dbReference type="HAMAP-Rule" id="MF_00019"/>
    </source>
</evidence>
<reference key="1">
    <citation type="journal article" date="2001" name="Proc. Natl. Acad. Sci. U.S.A.">
        <title>Analysis of the chromosome sequence of the legume symbiont Sinorhizobium meliloti strain 1021.</title>
        <authorList>
            <person name="Capela D."/>
            <person name="Barloy-Hubler F."/>
            <person name="Gouzy J."/>
            <person name="Bothe G."/>
            <person name="Ampe F."/>
            <person name="Batut J."/>
            <person name="Boistard P."/>
            <person name="Becker A."/>
            <person name="Boutry M."/>
            <person name="Cadieu E."/>
            <person name="Dreano S."/>
            <person name="Gloux S."/>
            <person name="Godrie T."/>
            <person name="Goffeau A."/>
            <person name="Kahn D."/>
            <person name="Kiss E."/>
            <person name="Lelaure V."/>
            <person name="Masuy D."/>
            <person name="Pohl T."/>
            <person name="Portetelle D."/>
            <person name="Puehler A."/>
            <person name="Purnelle B."/>
            <person name="Ramsperger U."/>
            <person name="Renard C."/>
            <person name="Thebault P."/>
            <person name="Vandenbol M."/>
            <person name="Weidner S."/>
            <person name="Galibert F."/>
        </authorList>
    </citation>
    <scope>NUCLEOTIDE SEQUENCE [LARGE SCALE GENOMIC DNA]</scope>
    <source>
        <strain>1021</strain>
    </source>
</reference>
<reference key="2">
    <citation type="journal article" date="2001" name="Science">
        <title>The composite genome of the legume symbiont Sinorhizobium meliloti.</title>
        <authorList>
            <person name="Galibert F."/>
            <person name="Finan T.M."/>
            <person name="Long S.R."/>
            <person name="Puehler A."/>
            <person name="Abola P."/>
            <person name="Ampe F."/>
            <person name="Barloy-Hubler F."/>
            <person name="Barnett M.J."/>
            <person name="Becker A."/>
            <person name="Boistard P."/>
            <person name="Bothe G."/>
            <person name="Boutry M."/>
            <person name="Bowser L."/>
            <person name="Buhrmester J."/>
            <person name="Cadieu E."/>
            <person name="Capela D."/>
            <person name="Chain P."/>
            <person name="Cowie A."/>
            <person name="Davis R.W."/>
            <person name="Dreano S."/>
            <person name="Federspiel N.A."/>
            <person name="Fisher R.F."/>
            <person name="Gloux S."/>
            <person name="Godrie T."/>
            <person name="Goffeau A."/>
            <person name="Golding B."/>
            <person name="Gouzy J."/>
            <person name="Gurjal M."/>
            <person name="Hernandez-Lucas I."/>
            <person name="Hong A."/>
            <person name="Huizar L."/>
            <person name="Hyman R.W."/>
            <person name="Jones T."/>
            <person name="Kahn D."/>
            <person name="Kahn M.L."/>
            <person name="Kalman S."/>
            <person name="Keating D.H."/>
            <person name="Kiss E."/>
            <person name="Komp C."/>
            <person name="Lelaure V."/>
            <person name="Masuy D."/>
            <person name="Palm C."/>
            <person name="Peck M.C."/>
            <person name="Pohl T.M."/>
            <person name="Portetelle D."/>
            <person name="Purnelle B."/>
            <person name="Ramsperger U."/>
            <person name="Surzycki R."/>
            <person name="Thebault P."/>
            <person name="Vandenbol M."/>
            <person name="Vorhoelter F.J."/>
            <person name="Weidner S."/>
            <person name="Wells D.H."/>
            <person name="Wong K."/>
            <person name="Yeh K.-C."/>
            <person name="Batut J."/>
        </authorList>
    </citation>
    <scope>NUCLEOTIDE SEQUENCE [LARGE SCALE GENOMIC DNA]</scope>
    <source>
        <strain>1021</strain>
    </source>
</reference>
<gene>
    <name evidence="1" type="primary">plsX</name>
    <name type="ordered locus">R01222</name>
    <name type="ORF">SMc01784</name>
</gene>
<proteinExistence type="inferred from homology"/>
<protein>
    <recommendedName>
        <fullName evidence="1">Phosphate acyltransferase</fullName>
        <ecNumber evidence="1">2.3.1.274</ecNumber>
    </recommendedName>
    <alternativeName>
        <fullName evidence="1">Acyl-ACP phosphotransacylase</fullName>
    </alternativeName>
    <alternativeName>
        <fullName evidence="1">Acyl-[acyl-carrier-protein]--phosphate acyltransferase</fullName>
    </alternativeName>
    <alternativeName>
        <fullName evidence="1">Phosphate-acyl-ACP acyltransferase</fullName>
    </alternativeName>
</protein>
<sequence length="347" mass="37021">MVRISLDVMGGDYGPEVVIPGAARALERHPDIKFVLFGQEARCIELLAKHPKLKASSTFHDCEIAVGMDEKPSQALRRGRGKSSMWKAIDAINADEADVVVSAGNTGALMAMSVFCLRTMQGIQRPAIAAIWPTLKGESIVLDVGATIGADAQQLMDFALMGGAMARALFEVERPSVGLLNVGVEEIKGQEEVKEAGRLIREADVEGIEYYGFVEGDDIGRGTVDVVVTEGFSGNIALKAAEGTARQIAEYLRAAMSRTLLARVGYVFAKGAFDRLREKMDPRKVNGGVFLGLNGIVIKSHGGADAEGFAAAIDVGYDMVKNGLKAKIEADLARYHGAQPSEAVPRA</sequence>
<comment type="function">
    <text evidence="1">Catalyzes the reversible formation of acyl-phosphate (acyl-PO(4)) from acyl-[acyl-carrier-protein] (acyl-ACP). This enzyme utilizes acyl-ACP as fatty acyl donor, but not acyl-CoA.</text>
</comment>
<comment type="catalytic activity">
    <reaction evidence="1">
        <text>a fatty acyl-[ACP] + phosphate = an acyl phosphate + holo-[ACP]</text>
        <dbReference type="Rhea" id="RHEA:42292"/>
        <dbReference type="Rhea" id="RHEA-COMP:9685"/>
        <dbReference type="Rhea" id="RHEA-COMP:14125"/>
        <dbReference type="ChEBI" id="CHEBI:43474"/>
        <dbReference type="ChEBI" id="CHEBI:59918"/>
        <dbReference type="ChEBI" id="CHEBI:64479"/>
        <dbReference type="ChEBI" id="CHEBI:138651"/>
        <dbReference type="EC" id="2.3.1.274"/>
    </reaction>
</comment>
<comment type="pathway">
    <text evidence="1">Lipid metabolism; phospholipid metabolism.</text>
</comment>
<comment type="subunit">
    <text evidence="1">Homodimer. Probably interacts with PlsY.</text>
</comment>
<comment type="subcellular location">
    <subcellularLocation>
        <location evidence="1">Cytoplasm</location>
    </subcellularLocation>
    <text evidence="1">Associated with the membrane possibly through PlsY.</text>
</comment>
<comment type="similarity">
    <text evidence="1">Belongs to the PlsX family.</text>
</comment>
<name>PLSX_RHIME</name>
<organism>
    <name type="scientific">Rhizobium meliloti (strain 1021)</name>
    <name type="common">Ensifer meliloti</name>
    <name type="synonym">Sinorhizobium meliloti</name>
    <dbReference type="NCBI Taxonomy" id="266834"/>
    <lineage>
        <taxon>Bacteria</taxon>
        <taxon>Pseudomonadati</taxon>
        <taxon>Pseudomonadota</taxon>
        <taxon>Alphaproteobacteria</taxon>
        <taxon>Hyphomicrobiales</taxon>
        <taxon>Rhizobiaceae</taxon>
        <taxon>Sinorhizobium/Ensifer group</taxon>
        <taxon>Sinorhizobium</taxon>
    </lineage>
</organism>
<accession>Q92QT5</accession>